<accession>B1ITH3</accession>
<keyword id="KW-0210">Decarboxylase</keyword>
<keyword id="KW-0456">Lyase</keyword>
<keyword id="KW-0665">Pyrimidine biosynthesis</keyword>
<feature type="chain" id="PRO_1000085490" description="Orotidine 5'-phosphate decarboxylase">
    <location>
        <begin position="1"/>
        <end position="245"/>
    </location>
</feature>
<feature type="active site" description="Proton donor" evidence="1">
    <location>
        <position position="73"/>
    </location>
</feature>
<feature type="binding site" evidence="1">
    <location>
        <position position="22"/>
    </location>
    <ligand>
        <name>substrate</name>
    </ligand>
</feature>
<feature type="binding site" evidence="1">
    <location>
        <position position="44"/>
    </location>
    <ligand>
        <name>substrate</name>
    </ligand>
</feature>
<feature type="binding site" evidence="1">
    <location>
        <begin position="71"/>
        <end position="80"/>
    </location>
    <ligand>
        <name>substrate</name>
    </ligand>
</feature>
<feature type="binding site" evidence="1">
    <location>
        <position position="131"/>
    </location>
    <ligand>
        <name>substrate</name>
    </ligand>
</feature>
<feature type="binding site" evidence="1">
    <location>
        <position position="192"/>
    </location>
    <ligand>
        <name>substrate</name>
    </ligand>
</feature>
<feature type="binding site" evidence="1">
    <location>
        <position position="201"/>
    </location>
    <ligand>
        <name>substrate</name>
    </ligand>
</feature>
<feature type="binding site" evidence="1">
    <location>
        <position position="221"/>
    </location>
    <ligand>
        <name>substrate</name>
    </ligand>
</feature>
<feature type="binding site" evidence="1">
    <location>
        <position position="222"/>
    </location>
    <ligand>
        <name>substrate</name>
    </ligand>
</feature>
<proteinExistence type="inferred from homology"/>
<sequence>MTLTASSSSRAVTNSPVVVALDYHNRDDALSFVDKIDPRDCRLKVGKEMFTLFGPQFVRELQQRGFDIFLDLKFHDIPNTAAHAVAAAADLGVWMVNVHASGGARMMTAAREALVPFGKDAPLLIAVTVLTSMEASDLVDLGMTLSPADYAERLAALTQKCGLDGVVCSAQEAVRFKQVFGQEFKLVTPGIRPQGSEAGDQRRIMTPEQALSAGVDYMVIGRPVTQSVDPAQTLKAINASLQRSA</sequence>
<organism>
    <name type="scientific">Escherichia coli (strain ATCC 8739 / DSM 1576 / NBRC 3972 / NCIMB 8545 / WDCM 00012 / Crooks)</name>
    <dbReference type="NCBI Taxonomy" id="481805"/>
    <lineage>
        <taxon>Bacteria</taxon>
        <taxon>Pseudomonadati</taxon>
        <taxon>Pseudomonadota</taxon>
        <taxon>Gammaproteobacteria</taxon>
        <taxon>Enterobacterales</taxon>
        <taxon>Enterobacteriaceae</taxon>
        <taxon>Escherichia</taxon>
    </lineage>
</organism>
<reference key="1">
    <citation type="submission" date="2008-02" db="EMBL/GenBank/DDBJ databases">
        <title>Complete sequence of Escherichia coli C str. ATCC 8739.</title>
        <authorList>
            <person name="Copeland A."/>
            <person name="Lucas S."/>
            <person name="Lapidus A."/>
            <person name="Glavina del Rio T."/>
            <person name="Dalin E."/>
            <person name="Tice H."/>
            <person name="Bruce D."/>
            <person name="Goodwin L."/>
            <person name="Pitluck S."/>
            <person name="Kiss H."/>
            <person name="Brettin T."/>
            <person name="Detter J.C."/>
            <person name="Han C."/>
            <person name="Kuske C.R."/>
            <person name="Schmutz J."/>
            <person name="Larimer F."/>
            <person name="Land M."/>
            <person name="Hauser L."/>
            <person name="Kyrpides N."/>
            <person name="Mikhailova N."/>
            <person name="Ingram L."/>
            <person name="Richardson P."/>
        </authorList>
    </citation>
    <scope>NUCLEOTIDE SEQUENCE [LARGE SCALE GENOMIC DNA]</scope>
    <source>
        <strain>ATCC 8739 / DSM 1576 / NBRC 3972 / NCIMB 8545 / WDCM 00012 / Crooks</strain>
    </source>
</reference>
<protein>
    <recommendedName>
        <fullName evidence="1">Orotidine 5'-phosphate decarboxylase</fullName>
        <ecNumber evidence="1">4.1.1.23</ecNumber>
    </recommendedName>
    <alternativeName>
        <fullName evidence="1">OMP decarboxylase</fullName>
        <shortName evidence="1">OMPDCase</shortName>
        <shortName evidence="1">OMPdecase</shortName>
    </alternativeName>
</protein>
<evidence type="ECO:0000255" key="1">
    <source>
        <dbReference type="HAMAP-Rule" id="MF_01200"/>
    </source>
</evidence>
<gene>
    <name evidence="1" type="primary">pyrF</name>
    <name type="ordered locus">EcolC_2345</name>
</gene>
<name>PYRF_ECOLC</name>
<dbReference type="EC" id="4.1.1.23" evidence="1"/>
<dbReference type="EMBL" id="CP000946">
    <property type="protein sequence ID" value="ACA77980.1"/>
    <property type="molecule type" value="Genomic_DNA"/>
</dbReference>
<dbReference type="RefSeq" id="WP_000176278.1">
    <property type="nucleotide sequence ID" value="NZ_MTFT01000016.1"/>
</dbReference>
<dbReference type="SMR" id="B1ITH3"/>
<dbReference type="GeneID" id="93775404"/>
<dbReference type="KEGG" id="ecl:EcolC_2345"/>
<dbReference type="HOGENOM" id="CLU_067069_0_0_6"/>
<dbReference type="UniPathway" id="UPA00070">
    <property type="reaction ID" value="UER00120"/>
</dbReference>
<dbReference type="GO" id="GO:0005829">
    <property type="term" value="C:cytosol"/>
    <property type="evidence" value="ECO:0007669"/>
    <property type="project" value="TreeGrafter"/>
</dbReference>
<dbReference type="GO" id="GO:0004590">
    <property type="term" value="F:orotidine-5'-phosphate decarboxylase activity"/>
    <property type="evidence" value="ECO:0007669"/>
    <property type="project" value="UniProtKB-UniRule"/>
</dbReference>
<dbReference type="GO" id="GO:0006207">
    <property type="term" value="P:'de novo' pyrimidine nucleobase biosynthetic process"/>
    <property type="evidence" value="ECO:0007669"/>
    <property type="project" value="InterPro"/>
</dbReference>
<dbReference type="GO" id="GO:0044205">
    <property type="term" value="P:'de novo' UMP biosynthetic process"/>
    <property type="evidence" value="ECO:0007669"/>
    <property type="project" value="UniProtKB-UniRule"/>
</dbReference>
<dbReference type="CDD" id="cd04725">
    <property type="entry name" value="OMP_decarboxylase_like"/>
    <property type="match status" value="1"/>
</dbReference>
<dbReference type="FunFam" id="3.20.20.70:FF:000015">
    <property type="entry name" value="Orotidine 5'-phosphate decarboxylase"/>
    <property type="match status" value="1"/>
</dbReference>
<dbReference type="Gene3D" id="3.20.20.70">
    <property type="entry name" value="Aldolase class I"/>
    <property type="match status" value="1"/>
</dbReference>
<dbReference type="HAMAP" id="MF_01200_B">
    <property type="entry name" value="OMPdecase_type1_B"/>
    <property type="match status" value="1"/>
</dbReference>
<dbReference type="InterPro" id="IPR013785">
    <property type="entry name" value="Aldolase_TIM"/>
</dbReference>
<dbReference type="InterPro" id="IPR014732">
    <property type="entry name" value="OMPdecase"/>
</dbReference>
<dbReference type="InterPro" id="IPR018089">
    <property type="entry name" value="OMPdecase_AS"/>
</dbReference>
<dbReference type="InterPro" id="IPR047596">
    <property type="entry name" value="OMPdecase_bac"/>
</dbReference>
<dbReference type="InterPro" id="IPR001754">
    <property type="entry name" value="OMPdeCOase_dom"/>
</dbReference>
<dbReference type="InterPro" id="IPR011060">
    <property type="entry name" value="RibuloseP-bd_barrel"/>
</dbReference>
<dbReference type="NCBIfam" id="NF001273">
    <property type="entry name" value="PRK00230.1"/>
    <property type="match status" value="1"/>
</dbReference>
<dbReference type="NCBIfam" id="TIGR01740">
    <property type="entry name" value="pyrF"/>
    <property type="match status" value="1"/>
</dbReference>
<dbReference type="PANTHER" id="PTHR32119">
    <property type="entry name" value="OROTIDINE 5'-PHOSPHATE DECARBOXYLASE"/>
    <property type="match status" value="1"/>
</dbReference>
<dbReference type="PANTHER" id="PTHR32119:SF2">
    <property type="entry name" value="OROTIDINE 5'-PHOSPHATE DECARBOXYLASE"/>
    <property type="match status" value="1"/>
</dbReference>
<dbReference type="Pfam" id="PF00215">
    <property type="entry name" value="OMPdecase"/>
    <property type="match status" value="1"/>
</dbReference>
<dbReference type="SMART" id="SM00934">
    <property type="entry name" value="OMPdecase"/>
    <property type="match status" value="1"/>
</dbReference>
<dbReference type="SUPFAM" id="SSF51366">
    <property type="entry name" value="Ribulose-phoshate binding barrel"/>
    <property type="match status" value="1"/>
</dbReference>
<dbReference type="PROSITE" id="PS00156">
    <property type="entry name" value="OMPDECASE"/>
    <property type="match status" value="1"/>
</dbReference>
<comment type="function">
    <text evidence="1">Catalyzes the decarboxylation of orotidine 5'-monophosphate (OMP) to uridine 5'-monophosphate (UMP).</text>
</comment>
<comment type="catalytic activity">
    <reaction evidence="1">
        <text>orotidine 5'-phosphate + H(+) = UMP + CO2</text>
        <dbReference type="Rhea" id="RHEA:11596"/>
        <dbReference type="ChEBI" id="CHEBI:15378"/>
        <dbReference type="ChEBI" id="CHEBI:16526"/>
        <dbReference type="ChEBI" id="CHEBI:57538"/>
        <dbReference type="ChEBI" id="CHEBI:57865"/>
        <dbReference type="EC" id="4.1.1.23"/>
    </reaction>
</comment>
<comment type="pathway">
    <text evidence="1">Pyrimidine metabolism; UMP biosynthesis via de novo pathway; UMP from orotate: step 2/2.</text>
</comment>
<comment type="subunit">
    <text evidence="1">Homodimer.</text>
</comment>
<comment type="similarity">
    <text evidence="1">Belongs to the OMP decarboxylase family. Type 1 subfamily.</text>
</comment>